<name>ATPA_GEOTN</name>
<comment type="function">
    <text evidence="1">Produces ATP from ADP in the presence of a proton gradient across the membrane. The alpha chain is a regulatory subunit.</text>
</comment>
<comment type="catalytic activity">
    <reaction evidence="1">
        <text>ATP + H2O + 4 H(+)(in) = ADP + phosphate + 5 H(+)(out)</text>
        <dbReference type="Rhea" id="RHEA:57720"/>
        <dbReference type="ChEBI" id="CHEBI:15377"/>
        <dbReference type="ChEBI" id="CHEBI:15378"/>
        <dbReference type="ChEBI" id="CHEBI:30616"/>
        <dbReference type="ChEBI" id="CHEBI:43474"/>
        <dbReference type="ChEBI" id="CHEBI:456216"/>
        <dbReference type="EC" id="7.1.2.2"/>
    </reaction>
</comment>
<comment type="subunit">
    <text evidence="1">F-type ATPases have 2 components, CF(1) - the catalytic core - and CF(0) - the membrane proton channel. CF(1) has five subunits: alpha(3), beta(3), gamma(1), delta(1), epsilon(1). CF(0) has three main subunits: a(1), b(2) and c(9-12). The alpha and beta chains form an alternating ring which encloses part of the gamma chain. CF(1) is attached to CF(0) by a central stalk formed by the gamma and epsilon chains, while a peripheral stalk is formed by the delta and b chains.</text>
</comment>
<comment type="subcellular location">
    <subcellularLocation>
        <location evidence="1">Cell membrane</location>
        <topology evidence="1">Peripheral membrane protein</topology>
    </subcellularLocation>
</comment>
<comment type="similarity">
    <text evidence="1">Belongs to the ATPase alpha/beta chains family.</text>
</comment>
<protein>
    <recommendedName>
        <fullName evidence="1">ATP synthase subunit alpha</fullName>
        <ecNumber evidence="1">7.1.2.2</ecNumber>
    </recommendedName>
    <alternativeName>
        <fullName evidence="1">ATP synthase F1 sector subunit alpha</fullName>
    </alternativeName>
    <alternativeName>
        <fullName evidence="1">F-ATPase subunit alpha</fullName>
    </alternativeName>
</protein>
<keyword id="KW-0066">ATP synthesis</keyword>
<keyword id="KW-0067">ATP-binding</keyword>
<keyword id="KW-1003">Cell membrane</keyword>
<keyword id="KW-0139">CF(1)</keyword>
<keyword id="KW-0375">Hydrogen ion transport</keyword>
<keyword id="KW-0406">Ion transport</keyword>
<keyword id="KW-0472">Membrane</keyword>
<keyword id="KW-0547">Nucleotide-binding</keyword>
<keyword id="KW-1278">Translocase</keyword>
<keyword id="KW-0813">Transport</keyword>
<sequence>MSIRAEEISALIKQQIENYESQIQVSDVGTVIQIGDGIARVHGLDNVMSGELVEFANGVMGMALNLEENNVGIVILGPYTGIKEGDEVRRTGRIMEVPVGEALIGRVVNPLGQPVDGLGPVETTETRPIESPAPGVMDRKSVHEPLQTGIKAIDALVPIGRGQRELIIGDRQTGKTAVAIDTILNQKGQDMICIYVAIGQKESTVRTVVETLRKHGALDYTIVVTASASQPAPLLFLAPYAGVSMGEYFMYKGKHVLVVYDDLSKQAAAYRELSLLLRRPPGREAYPGDVFYLHSRLLERAAKLSDAKGAGSLTALPFVETQAGDISAYIPTNVISITDGQIFLQSDLFFSGVRPAINAGLSVSRVGGAAQIKAMKKVSGTLRLDLAAYRELEAFAQFGSDLDKATQAKLARGARTVEVLKQDLHQPIPVEKQVAIIYALTRGFLDDIPVEDVRRFEKEFFLWLDQNGQHLLEHIRTTKDLPNEEDFNKAIEAFKKTFVVSQ</sequence>
<evidence type="ECO:0000255" key="1">
    <source>
        <dbReference type="HAMAP-Rule" id="MF_01346"/>
    </source>
</evidence>
<evidence type="ECO:0000256" key="2">
    <source>
        <dbReference type="SAM" id="MobiDB-lite"/>
    </source>
</evidence>
<dbReference type="EC" id="7.1.2.2" evidence="1"/>
<dbReference type="EMBL" id="CP000557">
    <property type="protein sequence ID" value="ABO68645.1"/>
    <property type="molecule type" value="Genomic_DNA"/>
</dbReference>
<dbReference type="RefSeq" id="WP_011888397.1">
    <property type="nucleotide sequence ID" value="NC_009328.1"/>
</dbReference>
<dbReference type="SMR" id="A4ITJ1"/>
<dbReference type="GeneID" id="87622584"/>
<dbReference type="KEGG" id="gtn:GTNG_3306"/>
<dbReference type="eggNOG" id="COG0056">
    <property type="taxonomic scope" value="Bacteria"/>
</dbReference>
<dbReference type="HOGENOM" id="CLU_010091_2_1_9"/>
<dbReference type="Proteomes" id="UP000001578">
    <property type="component" value="Chromosome"/>
</dbReference>
<dbReference type="GO" id="GO:0005886">
    <property type="term" value="C:plasma membrane"/>
    <property type="evidence" value="ECO:0007669"/>
    <property type="project" value="UniProtKB-SubCell"/>
</dbReference>
<dbReference type="GO" id="GO:0045259">
    <property type="term" value="C:proton-transporting ATP synthase complex"/>
    <property type="evidence" value="ECO:0007669"/>
    <property type="project" value="UniProtKB-KW"/>
</dbReference>
<dbReference type="GO" id="GO:0043531">
    <property type="term" value="F:ADP binding"/>
    <property type="evidence" value="ECO:0007669"/>
    <property type="project" value="TreeGrafter"/>
</dbReference>
<dbReference type="GO" id="GO:0005524">
    <property type="term" value="F:ATP binding"/>
    <property type="evidence" value="ECO:0007669"/>
    <property type="project" value="UniProtKB-UniRule"/>
</dbReference>
<dbReference type="GO" id="GO:0046933">
    <property type="term" value="F:proton-transporting ATP synthase activity, rotational mechanism"/>
    <property type="evidence" value="ECO:0007669"/>
    <property type="project" value="UniProtKB-UniRule"/>
</dbReference>
<dbReference type="CDD" id="cd18113">
    <property type="entry name" value="ATP-synt_F1_alpha_C"/>
    <property type="match status" value="1"/>
</dbReference>
<dbReference type="CDD" id="cd18116">
    <property type="entry name" value="ATP-synt_F1_alpha_N"/>
    <property type="match status" value="1"/>
</dbReference>
<dbReference type="CDD" id="cd01132">
    <property type="entry name" value="F1-ATPase_alpha_CD"/>
    <property type="match status" value="1"/>
</dbReference>
<dbReference type="FunFam" id="1.20.150.20:FF:000001">
    <property type="entry name" value="ATP synthase subunit alpha"/>
    <property type="match status" value="1"/>
</dbReference>
<dbReference type="FunFam" id="2.40.30.20:FF:000001">
    <property type="entry name" value="ATP synthase subunit alpha"/>
    <property type="match status" value="1"/>
</dbReference>
<dbReference type="FunFam" id="3.40.50.300:FF:000002">
    <property type="entry name" value="ATP synthase subunit alpha"/>
    <property type="match status" value="1"/>
</dbReference>
<dbReference type="Gene3D" id="2.40.30.20">
    <property type="match status" value="1"/>
</dbReference>
<dbReference type="Gene3D" id="1.20.150.20">
    <property type="entry name" value="ATP synthase alpha/beta chain, C-terminal domain"/>
    <property type="match status" value="1"/>
</dbReference>
<dbReference type="Gene3D" id="3.40.50.300">
    <property type="entry name" value="P-loop containing nucleotide triphosphate hydrolases"/>
    <property type="match status" value="1"/>
</dbReference>
<dbReference type="HAMAP" id="MF_01346">
    <property type="entry name" value="ATP_synth_alpha_bact"/>
    <property type="match status" value="1"/>
</dbReference>
<dbReference type="InterPro" id="IPR023366">
    <property type="entry name" value="ATP_synth_asu-like_sf"/>
</dbReference>
<dbReference type="InterPro" id="IPR000793">
    <property type="entry name" value="ATP_synth_asu_C"/>
</dbReference>
<dbReference type="InterPro" id="IPR038376">
    <property type="entry name" value="ATP_synth_asu_C_sf"/>
</dbReference>
<dbReference type="InterPro" id="IPR033732">
    <property type="entry name" value="ATP_synth_F1_a_nt-bd_dom"/>
</dbReference>
<dbReference type="InterPro" id="IPR005294">
    <property type="entry name" value="ATP_synth_F1_asu"/>
</dbReference>
<dbReference type="InterPro" id="IPR020003">
    <property type="entry name" value="ATPase_a/bsu_AS"/>
</dbReference>
<dbReference type="InterPro" id="IPR004100">
    <property type="entry name" value="ATPase_F1/V1/A1_a/bsu_N"/>
</dbReference>
<dbReference type="InterPro" id="IPR036121">
    <property type="entry name" value="ATPase_F1/V1/A1_a/bsu_N_sf"/>
</dbReference>
<dbReference type="InterPro" id="IPR000194">
    <property type="entry name" value="ATPase_F1/V1/A1_a/bsu_nucl-bd"/>
</dbReference>
<dbReference type="InterPro" id="IPR027417">
    <property type="entry name" value="P-loop_NTPase"/>
</dbReference>
<dbReference type="NCBIfam" id="TIGR00962">
    <property type="entry name" value="atpA"/>
    <property type="match status" value="1"/>
</dbReference>
<dbReference type="NCBIfam" id="NF009884">
    <property type="entry name" value="PRK13343.1"/>
    <property type="match status" value="1"/>
</dbReference>
<dbReference type="PANTHER" id="PTHR48082">
    <property type="entry name" value="ATP SYNTHASE SUBUNIT ALPHA, MITOCHONDRIAL"/>
    <property type="match status" value="1"/>
</dbReference>
<dbReference type="PANTHER" id="PTHR48082:SF2">
    <property type="entry name" value="ATP SYNTHASE SUBUNIT ALPHA, MITOCHONDRIAL"/>
    <property type="match status" value="1"/>
</dbReference>
<dbReference type="Pfam" id="PF00006">
    <property type="entry name" value="ATP-synt_ab"/>
    <property type="match status" value="1"/>
</dbReference>
<dbReference type="Pfam" id="PF00306">
    <property type="entry name" value="ATP-synt_ab_C"/>
    <property type="match status" value="1"/>
</dbReference>
<dbReference type="Pfam" id="PF02874">
    <property type="entry name" value="ATP-synt_ab_N"/>
    <property type="match status" value="1"/>
</dbReference>
<dbReference type="PIRSF" id="PIRSF039088">
    <property type="entry name" value="F_ATPase_subunit_alpha"/>
    <property type="match status" value="1"/>
</dbReference>
<dbReference type="SUPFAM" id="SSF47917">
    <property type="entry name" value="C-terminal domain of alpha and beta subunits of F1 ATP synthase"/>
    <property type="match status" value="1"/>
</dbReference>
<dbReference type="SUPFAM" id="SSF50615">
    <property type="entry name" value="N-terminal domain of alpha and beta subunits of F1 ATP synthase"/>
    <property type="match status" value="1"/>
</dbReference>
<dbReference type="SUPFAM" id="SSF52540">
    <property type="entry name" value="P-loop containing nucleoside triphosphate hydrolases"/>
    <property type="match status" value="1"/>
</dbReference>
<dbReference type="PROSITE" id="PS00152">
    <property type="entry name" value="ATPASE_ALPHA_BETA"/>
    <property type="match status" value="1"/>
</dbReference>
<accession>A4ITJ1</accession>
<feature type="chain" id="PRO_0000302651" description="ATP synthase subunit alpha">
    <location>
        <begin position="1"/>
        <end position="502"/>
    </location>
</feature>
<feature type="region of interest" description="Disordered" evidence="2">
    <location>
        <begin position="115"/>
        <end position="139"/>
    </location>
</feature>
<feature type="binding site" evidence="1">
    <location>
        <begin position="169"/>
        <end position="176"/>
    </location>
    <ligand>
        <name>ATP</name>
        <dbReference type="ChEBI" id="CHEBI:30616"/>
    </ligand>
</feature>
<feature type="site" description="Required for activity" evidence="1">
    <location>
        <position position="362"/>
    </location>
</feature>
<gene>
    <name evidence="1" type="primary">atpA</name>
    <name type="ordered locus">GTNG_3306</name>
</gene>
<organism>
    <name type="scientific">Geobacillus thermodenitrificans (strain NG80-2)</name>
    <dbReference type="NCBI Taxonomy" id="420246"/>
    <lineage>
        <taxon>Bacteria</taxon>
        <taxon>Bacillati</taxon>
        <taxon>Bacillota</taxon>
        <taxon>Bacilli</taxon>
        <taxon>Bacillales</taxon>
        <taxon>Anoxybacillaceae</taxon>
        <taxon>Geobacillus</taxon>
    </lineage>
</organism>
<reference key="1">
    <citation type="journal article" date="2007" name="Proc. Natl. Acad. Sci. U.S.A.">
        <title>Genome and proteome of long-chain alkane degrading Geobacillus thermodenitrificans NG80-2 isolated from a deep-subsurface oil reservoir.</title>
        <authorList>
            <person name="Feng L."/>
            <person name="Wang W."/>
            <person name="Cheng J."/>
            <person name="Ren Y."/>
            <person name="Zhao G."/>
            <person name="Gao C."/>
            <person name="Tang Y."/>
            <person name="Liu X."/>
            <person name="Han W."/>
            <person name="Peng X."/>
            <person name="Liu R."/>
            <person name="Wang L."/>
        </authorList>
    </citation>
    <scope>NUCLEOTIDE SEQUENCE [LARGE SCALE GENOMIC DNA]</scope>
    <source>
        <strain>NG80-2</strain>
    </source>
</reference>
<proteinExistence type="inferred from homology"/>